<dbReference type="EMBL" id="CP000471">
    <property type="protein sequence ID" value="ABK42805.1"/>
    <property type="molecule type" value="Genomic_DNA"/>
</dbReference>
<dbReference type="RefSeq" id="WP_011711977.1">
    <property type="nucleotide sequence ID" value="NC_008576.1"/>
</dbReference>
<dbReference type="SMR" id="A0L4B2"/>
<dbReference type="STRING" id="156889.Mmc1_0278"/>
<dbReference type="KEGG" id="mgm:Mmc1_0278"/>
<dbReference type="eggNOG" id="COG2262">
    <property type="taxonomic scope" value="Bacteria"/>
</dbReference>
<dbReference type="HOGENOM" id="CLU_019597_1_0_5"/>
<dbReference type="OrthoDB" id="9812272at2"/>
<dbReference type="Proteomes" id="UP000002586">
    <property type="component" value="Chromosome"/>
</dbReference>
<dbReference type="GO" id="GO:0005737">
    <property type="term" value="C:cytoplasm"/>
    <property type="evidence" value="ECO:0007669"/>
    <property type="project" value="UniProtKB-SubCell"/>
</dbReference>
<dbReference type="GO" id="GO:0005525">
    <property type="term" value="F:GTP binding"/>
    <property type="evidence" value="ECO:0007669"/>
    <property type="project" value="UniProtKB-UniRule"/>
</dbReference>
<dbReference type="GO" id="GO:0003924">
    <property type="term" value="F:GTPase activity"/>
    <property type="evidence" value="ECO:0007669"/>
    <property type="project" value="UniProtKB-UniRule"/>
</dbReference>
<dbReference type="GO" id="GO:0046872">
    <property type="term" value="F:metal ion binding"/>
    <property type="evidence" value="ECO:0007669"/>
    <property type="project" value="UniProtKB-KW"/>
</dbReference>
<dbReference type="GO" id="GO:0043022">
    <property type="term" value="F:ribosome binding"/>
    <property type="evidence" value="ECO:0007669"/>
    <property type="project" value="TreeGrafter"/>
</dbReference>
<dbReference type="CDD" id="cd01878">
    <property type="entry name" value="HflX"/>
    <property type="match status" value="1"/>
</dbReference>
<dbReference type="FunFam" id="3.40.50.11060:FF:000001">
    <property type="entry name" value="GTPase HflX"/>
    <property type="match status" value="1"/>
</dbReference>
<dbReference type="FunFam" id="3.40.50.300:FF:000173">
    <property type="entry name" value="GTPase HflX"/>
    <property type="match status" value="1"/>
</dbReference>
<dbReference type="Gene3D" id="6.10.250.2860">
    <property type="match status" value="1"/>
</dbReference>
<dbReference type="Gene3D" id="3.40.50.11060">
    <property type="entry name" value="GTPase HflX, N-terminal domain"/>
    <property type="match status" value="1"/>
</dbReference>
<dbReference type="Gene3D" id="3.40.50.300">
    <property type="entry name" value="P-loop containing nucleotide triphosphate hydrolases"/>
    <property type="match status" value="1"/>
</dbReference>
<dbReference type="HAMAP" id="MF_00900">
    <property type="entry name" value="GTPase_HflX"/>
    <property type="match status" value="1"/>
</dbReference>
<dbReference type="InterPro" id="IPR030394">
    <property type="entry name" value="G_HFLX_dom"/>
</dbReference>
<dbReference type="InterPro" id="IPR006073">
    <property type="entry name" value="GTP-bd"/>
</dbReference>
<dbReference type="InterPro" id="IPR032305">
    <property type="entry name" value="GTP-bd_M"/>
</dbReference>
<dbReference type="InterPro" id="IPR016496">
    <property type="entry name" value="GTPase_HflX"/>
</dbReference>
<dbReference type="InterPro" id="IPR025121">
    <property type="entry name" value="GTPase_HflX_N"/>
</dbReference>
<dbReference type="InterPro" id="IPR042108">
    <property type="entry name" value="GTPase_HflX_N_sf"/>
</dbReference>
<dbReference type="InterPro" id="IPR027417">
    <property type="entry name" value="P-loop_NTPase"/>
</dbReference>
<dbReference type="NCBIfam" id="TIGR03156">
    <property type="entry name" value="GTP_HflX"/>
    <property type="match status" value="1"/>
</dbReference>
<dbReference type="PANTHER" id="PTHR10229:SF0">
    <property type="entry name" value="GTP-BINDING PROTEIN 6-RELATED"/>
    <property type="match status" value="1"/>
</dbReference>
<dbReference type="PANTHER" id="PTHR10229">
    <property type="entry name" value="GTP-BINDING PROTEIN HFLX"/>
    <property type="match status" value="1"/>
</dbReference>
<dbReference type="Pfam" id="PF16360">
    <property type="entry name" value="GTP-bdg_M"/>
    <property type="match status" value="1"/>
</dbReference>
<dbReference type="Pfam" id="PF13167">
    <property type="entry name" value="GTP-bdg_N"/>
    <property type="match status" value="1"/>
</dbReference>
<dbReference type="Pfam" id="PF01926">
    <property type="entry name" value="MMR_HSR1"/>
    <property type="match status" value="1"/>
</dbReference>
<dbReference type="PIRSF" id="PIRSF006809">
    <property type="entry name" value="GTP-binding_hflX_prd"/>
    <property type="match status" value="1"/>
</dbReference>
<dbReference type="PRINTS" id="PR00326">
    <property type="entry name" value="GTP1OBG"/>
</dbReference>
<dbReference type="SUPFAM" id="SSF52540">
    <property type="entry name" value="P-loop containing nucleoside triphosphate hydrolases"/>
    <property type="match status" value="1"/>
</dbReference>
<dbReference type="PROSITE" id="PS51705">
    <property type="entry name" value="G_HFLX"/>
    <property type="match status" value="1"/>
</dbReference>
<comment type="function">
    <text evidence="1">GTPase that associates with the 50S ribosomal subunit and may have a role during protein synthesis or ribosome biogenesis.</text>
</comment>
<comment type="cofactor">
    <cofactor evidence="1">
        <name>Mg(2+)</name>
        <dbReference type="ChEBI" id="CHEBI:18420"/>
    </cofactor>
</comment>
<comment type="subunit">
    <text evidence="1">Monomer. Associates with the 50S ribosomal subunit.</text>
</comment>
<comment type="subcellular location">
    <subcellularLocation>
        <location evidence="1">Cytoplasm</location>
    </subcellularLocation>
    <text evidence="1">May associate with membranes.</text>
</comment>
<comment type="similarity">
    <text evidence="1">Belongs to the TRAFAC class OBG-HflX-like GTPase superfamily. HflX GTPase family.</text>
</comment>
<protein>
    <recommendedName>
        <fullName evidence="1">GTPase HflX</fullName>
    </recommendedName>
    <alternativeName>
        <fullName evidence="1">GTP-binding protein HflX</fullName>
    </alternativeName>
</protein>
<feature type="chain" id="PRO_0000412661" description="GTPase HflX">
    <location>
        <begin position="1"/>
        <end position="432"/>
    </location>
</feature>
<feature type="domain" description="Hflx-type G" evidence="1">
    <location>
        <begin position="202"/>
        <end position="367"/>
    </location>
</feature>
<feature type="binding site" evidence="1">
    <location>
        <begin position="208"/>
        <end position="215"/>
    </location>
    <ligand>
        <name>GTP</name>
        <dbReference type="ChEBI" id="CHEBI:37565"/>
    </ligand>
</feature>
<feature type="binding site" evidence="1">
    <location>
        <position position="215"/>
    </location>
    <ligand>
        <name>Mg(2+)</name>
        <dbReference type="ChEBI" id="CHEBI:18420"/>
    </ligand>
</feature>
<feature type="binding site" evidence="1">
    <location>
        <begin position="233"/>
        <end position="237"/>
    </location>
    <ligand>
        <name>GTP</name>
        <dbReference type="ChEBI" id="CHEBI:37565"/>
    </ligand>
</feature>
<feature type="binding site" evidence="1">
    <location>
        <position position="235"/>
    </location>
    <ligand>
        <name>Mg(2+)</name>
        <dbReference type="ChEBI" id="CHEBI:18420"/>
    </ligand>
</feature>
<feature type="binding site" evidence="1">
    <location>
        <begin position="255"/>
        <end position="258"/>
    </location>
    <ligand>
        <name>GTP</name>
        <dbReference type="ChEBI" id="CHEBI:37565"/>
    </ligand>
</feature>
<feature type="binding site" evidence="1">
    <location>
        <begin position="321"/>
        <end position="324"/>
    </location>
    <ligand>
        <name>GTP</name>
        <dbReference type="ChEBI" id="CHEBI:37565"/>
    </ligand>
</feature>
<feature type="binding site" evidence="1">
    <location>
        <begin position="345"/>
        <end position="347"/>
    </location>
    <ligand>
        <name>GTP</name>
        <dbReference type="ChEBI" id="CHEBI:37565"/>
    </ligand>
</feature>
<evidence type="ECO:0000255" key="1">
    <source>
        <dbReference type="HAMAP-Rule" id="MF_00900"/>
    </source>
</evidence>
<proteinExistence type="inferred from homology"/>
<reference key="1">
    <citation type="journal article" date="2009" name="Appl. Environ. Microbiol.">
        <title>Complete genome sequence of the chemolithoautotrophic marine magnetotactic coccus strain MC-1.</title>
        <authorList>
            <person name="Schubbe S."/>
            <person name="Williams T.J."/>
            <person name="Xie G."/>
            <person name="Kiss H.E."/>
            <person name="Brettin T.S."/>
            <person name="Martinez D."/>
            <person name="Ross C.A."/>
            <person name="Schuler D."/>
            <person name="Cox B.L."/>
            <person name="Nealson K.H."/>
            <person name="Bazylinski D.A."/>
        </authorList>
    </citation>
    <scope>NUCLEOTIDE SEQUENCE [LARGE SCALE GENOMIC DNA]</scope>
    <source>
        <strain>ATCC BAA-1437 / JCM 17883 / MC-1</strain>
    </source>
</reference>
<sequence length="432" mass="48556">MLETHQAPDRAILLQALEPKVTRDACQRLLDELVHLSTTAGLEVHATQLLSLQKAVPATYFGSGQVEELARRIEEDEIDVAVVNHALTPIQQRNLEKKLNAKVVDRTGLILEIFAARARTREGIMQVELASLMYQQSRLVRSWTHLERQRGGVGLRGGPGERQIEVDRRLIRERIHKLKKQLEEVERTRALQRQPRQDIPLFTVALVGYTNAGKSTLFNLLTRAGVLAEDKLFATLDPTMRAVDLPDGGRILLSDTVGFIRQLPHQLVAAFKATLEEVMSADMLLHVVDLSDPEWERYVESVNGVLQELEVQHTRTLTVYNKIDRLESRGILERELARGDTIGVSAQTGEGVEPLLSELRRAVGRAMLRYEVILPVSDGRWLAKFHAEASVVEVREGEDFTTLIVELAPAVLGRLQGEVEREGVEVQFRPVD</sequence>
<name>HFLX_MAGMM</name>
<organism>
    <name type="scientific">Magnetococcus marinus (strain ATCC BAA-1437 / JCM 17883 / MC-1)</name>
    <dbReference type="NCBI Taxonomy" id="156889"/>
    <lineage>
        <taxon>Bacteria</taxon>
        <taxon>Pseudomonadati</taxon>
        <taxon>Pseudomonadota</taxon>
        <taxon>Alphaproteobacteria</taxon>
        <taxon>Magnetococcales</taxon>
        <taxon>Magnetococcaceae</taxon>
        <taxon>Magnetococcus</taxon>
    </lineage>
</organism>
<accession>A0L4B2</accession>
<keyword id="KW-0963">Cytoplasm</keyword>
<keyword id="KW-0342">GTP-binding</keyword>
<keyword id="KW-0460">Magnesium</keyword>
<keyword id="KW-0479">Metal-binding</keyword>
<keyword id="KW-0547">Nucleotide-binding</keyword>
<keyword id="KW-1185">Reference proteome</keyword>
<gene>
    <name evidence="1" type="primary">hflX</name>
    <name type="ordered locus">Mmc1_0278</name>
</gene>